<feature type="chain" id="PRO_0000226184" description="Ketol-acid reductoisomerase (NADP(+))">
    <location>
        <begin position="1"/>
        <end position="339"/>
    </location>
</feature>
<feature type="domain" description="KARI N-terminal Rossmann" evidence="2">
    <location>
        <begin position="1"/>
        <end position="182"/>
    </location>
</feature>
<feature type="domain" description="KARI C-terminal knotted" evidence="3">
    <location>
        <begin position="183"/>
        <end position="328"/>
    </location>
</feature>
<feature type="active site" evidence="1">
    <location>
        <position position="108"/>
    </location>
</feature>
<feature type="binding site" evidence="1">
    <location>
        <begin position="24"/>
        <end position="27"/>
    </location>
    <ligand>
        <name>NADP(+)</name>
        <dbReference type="ChEBI" id="CHEBI:58349"/>
    </ligand>
</feature>
<feature type="binding site" evidence="1">
    <location>
        <position position="48"/>
    </location>
    <ligand>
        <name>NADP(+)</name>
        <dbReference type="ChEBI" id="CHEBI:58349"/>
    </ligand>
</feature>
<feature type="binding site" evidence="1">
    <location>
        <position position="51"/>
    </location>
    <ligand>
        <name>NADP(+)</name>
        <dbReference type="ChEBI" id="CHEBI:58349"/>
    </ligand>
</feature>
<feature type="binding site" evidence="1">
    <location>
        <position position="53"/>
    </location>
    <ligand>
        <name>NADP(+)</name>
        <dbReference type="ChEBI" id="CHEBI:58349"/>
    </ligand>
</feature>
<feature type="binding site" evidence="1">
    <location>
        <begin position="83"/>
        <end position="86"/>
    </location>
    <ligand>
        <name>NADP(+)</name>
        <dbReference type="ChEBI" id="CHEBI:58349"/>
    </ligand>
</feature>
<feature type="binding site" evidence="1">
    <location>
        <position position="134"/>
    </location>
    <ligand>
        <name>NADP(+)</name>
        <dbReference type="ChEBI" id="CHEBI:58349"/>
    </ligand>
</feature>
<feature type="binding site" evidence="1">
    <location>
        <position position="191"/>
    </location>
    <ligand>
        <name>Mg(2+)</name>
        <dbReference type="ChEBI" id="CHEBI:18420"/>
        <label>1</label>
    </ligand>
</feature>
<feature type="binding site" evidence="1">
    <location>
        <position position="191"/>
    </location>
    <ligand>
        <name>Mg(2+)</name>
        <dbReference type="ChEBI" id="CHEBI:18420"/>
        <label>2</label>
    </ligand>
</feature>
<feature type="binding site" evidence="1">
    <location>
        <position position="195"/>
    </location>
    <ligand>
        <name>Mg(2+)</name>
        <dbReference type="ChEBI" id="CHEBI:18420"/>
        <label>1</label>
    </ligand>
</feature>
<feature type="binding site" evidence="1">
    <location>
        <position position="227"/>
    </location>
    <ligand>
        <name>Mg(2+)</name>
        <dbReference type="ChEBI" id="CHEBI:18420"/>
        <label>2</label>
    </ligand>
</feature>
<feature type="binding site" evidence="1">
    <location>
        <position position="231"/>
    </location>
    <ligand>
        <name>Mg(2+)</name>
        <dbReference type="ChEBI" id="CHEBI:18420"/>
        <label>2</label>
    </ligand>
</feature>
<feature type="binding site" evidence="1">
    <location>
        <position position="252"/>
    </location>
    <ligand>
        <name>substrate</name>
    </ligand>
</feature>
<name>ILVC_NITWN</name>
<organism>
    <name type="scientific">Nitrobacter winogradskyi (strain ATCC 25391 / DSM 10237 / CIP 104748 / NCIMB 11846 / Nb-255)</name>
    <dbReference type="NCBI Taxonomy" id="323098"/>
    <lineage>
        <taxon>Bacteria</taxon>
        <taxon>Pseudomonadati</taxon>
        <taxon>Pseudomonadota</taxon>
        <taxon>Alphaproteobacteria</taxon>
        <taxon>Hyphomicrobiales</taxon>
        <taxon>Nitrobacteraceae</taxon>
        <taxon>Nitrobacter</taxon>
    </lineage>
</organism>
<dbReference type="EC" id="1.1.1.86" evidence="1"/>
<dbReference type="EMBL" id="CP000115">
    <property type="protein sequence ID" value="ABA05595.1"/>
    <property type="molecule type" value="Genomic_DNA"/>
</dbReference>
<dbReference type="RefSeq" id="WP_011315559.1">
    <property type="nucleotide sequence ID" value="NC_007406.1"/>
</dbReference>
<dbReference type="SMR" id="Q3SQ46"/>
<dbReference type="STRING" id="323098.Nwi_2341"/>
<dbReference type="KEGG" id="nwi:Nwi_2341"/>
<dbReference type="eggNOG" id="COG0059">
    <property type="taxonomic scope" value="Bacteria"/>
</dbReference>
<dbReference type="HOGENOM" id="CLU_033821_0_1_5"/>
<dbReference type="OrthoDB" id="9804088at2"/>
<dbReference type="UniPathway" id="UPA00047">
    <property type="reaction ID" value="UER00056"/>
</dbReference>
<dbReference type="UniPathway" id="UPA00049">
    <property type="reaction ID" value="UER00060"/>
</dbReference>
<dbReference type="Proteomes" id="UP000002531">
    <property type="component" value="Chromosome"/>
</dbReference>
<dbReference type="GO" id="GO:0005829">
    <property type="term" value="C:cytosol"/>
    <property type="evidence" value="ECO:0007669"/>
    <property type="project" value="TreeGrafter"/>
</dbReference>
<dbReference type="GO" id="GO:0004455">
    <property type="term" value="F:ketol-acid reductoisomerase activity"/>
    <property type="evidence" value="ECO:0007669"/>
    <property type="project" value="UniProtKB-UniRule"/>
</dbReference>
<dbReference type="GO" id="GO:0000287">
    <property type="term" value="F:magnesium ion binding"/>
    <property type="evidence" value="ECO:0007669"/>
    <property type="project" value="UniProtKB-UniRule"/>
</dbReference>
<dbReference type="GO" id="GO:0050661">
    <property type="term" value="F:NADP binding"/>
    <property type="evidence" value="ECO:0007669"/>
    <property type="project" value="InterPro"/>
</dbReference>
<dbReference type="GO" id="GO:0009097">
    <property type="term" value="P:isoleucine biosynthetic process"/>
    <property type="evidence" value="ECO:0007669"/>
    <property type="project" value="UniProtKB-UniRule"/>
</dbReference>
<dbReference type="GO" id="GO:0009099">
    <property type="term" value="P:L-valine biosynthetic process"/>
    <property type="evidence" value="ECO:0007669"/>
    <property type="project" value="UniProtKB-UniRule"/>
</dbReference>
<dbReference type="FunFam" id="3.40.50.720:FF:000023">
    <property type="entry name" value="Ketol-acid reductoisomerase (NADP(+))"/>
    <property type="match status" value="1"/>
</dbReference>
<dbReference type="Gene3D" id="6.10.240.10">
    <property type="match status" value="1"/>
</dbReference>
<dbReference type="Gene3D" id="3.40.50.720">
    <property type="entry name" value="NAD(P)-binding Rossmann-like Domain"/>
    <property type="match status" value="1"/>
</dbReference>
<dbReference type="HAMAP" id="MF_00435">
    <property type="entry name" value="IlvC"/>
    <property type="match status" value="1"/>
</dbReference>
<dbReference type="InterPro" id="IPR008927">
    <property type="entry name" value="6-PGluconate_DH-like_C_sf"/>
</dbReference>
<dbReference type="InterPro" id="IPR013023">
    <property type="entry name" value="KARI"/>
</dbReference>
<dbReference type="InterPro" id="IPR000506">
    <property type="entry name" value="KARI_C"/>
</dbReference>
<dbReference type="InterPro" id="IPR013116">
    <property type="entry name" value="KARI_N"/>
</dbReference>
<dbReference type="InterPro" id="IPR014359">
    <property type="entry name" value="KARI_prok"/>
</dbReference>
<dbReference type="InterPro" id="IPR036291">
    <property type="entry name" value="NAD(P)-bd_dom_sf"/>
</dbReference>
<dbReference type="NCBIfam" id="TIGR00465">
    <property type="entry name" value="ilvC"/>
    <property type="match status" value="1"/>
</dbReference>
<dbReference type="NCBIfam" id="NF004017">
    <property type="entry name" value="PRK05479.1"/>
    <property type="match status" value="1"/>
</dbReference>
<dbReference type="NCBIfam" id="NF009940">
    <property type="entry name" value="PRK13403.1"/>
    <property type="match status" value="1"/>
</dbReference>
<dbReference type="PANTHER" id="PTHR21371">
    <property type="entry name" value="KETOL-ACID REDUCTOISOMERASE, MITOCHONDRIAL"/>
    <property type="match status" value="1"/>
</dbReference>
<dbReference type="PANTHER" id="PTHR21371:SF1">
    <property type="entry name" value="KETOL-ACID REDUCTOISOMERASE, MITOCHONDRIAL"/>
    <property type="match status" value="1"/>
</dbReference>
<dbReference type="Pfam" id="PF01450">
    <property type="entry name" value="KARI_C"/>
    <property type="match status" value="1"/>
</dbReference>
<dbReference type="Pfam" id="PF07991">
    <property type="entry name" value="KARI_N"/>
    <property type="match status" value="1"/>
</dbReference>
<dbReference type="PIRSF" id="PIRSF000116">
    <property type="entry name" value="IlvC_gammaproteo"/>
    <property type="match status" value="1"/>
</dbReference>
<dbReference type="SUPFAM" id="SSF48179">
    <property type="entry name" value="6-phosphogluconate dehydrogenase C-terminal domain-like"/>
    <property type="match status" value="1"/>
</dbReference>
<dbReference type="SUPFAM" id="SSF51735">
    <property type="entry name" value="NAD(P)-binding Rossmann-fold domains"/>
    <property type="match status" value="1"/>
</dbReference>
<dbReference type="PROSITE" id="PS51851">
    <property type="entry name" value="KARI_C"/>
    <property type="match status" value="1"/>
</dbReference>
<dbReference type="PROSITE" id="PS51850">
    <property type="entry name" value="KARI_N"/>
    <property type="match status" value="1"/>
</dbReference>
<evidence type="ECO:0000255" key="1">
    <source>
        <dbReference type="HAMAP-Rule" id="MF_00435"/>
    </source>
</evidence>
<evidence type="ECO:0000255" key="2">
    <source>
        <dbReference type="PROSITE-ProRule" id="PRU01197"/>
    </source>
</evidence>
<evidence type="ECO:0000255" key="3">
    <source>
        <dbReference type="PROSITE-ProRule" id="PRU01198"/>
    </source>
</evidence>
<proteinExistence type="inferred from homology"/>
<protein>
    <recommendedName>
        <fullName evidence="1">Ketol-acid reductoisomerase (NADP(+))</fullName>
        <shortName evidence="1">KARI</shortName>
        <ecNumber evidence="1">1.1.1.86</ecNumber>
    </recommendedName>
    <alternativeName>
        <fullName evidence="1">Acetohydroxy-acid isomeroreductase</fullName>
        <shortName evidence="1">AHIR</shortName>
    </alternativeName>
    <alternativeName>
        <fullName evidence="1">Alpha-keto-beta-hydroxylacyl reductoisomerase</fullName>
    </alternativeName>
    <alternativeName>
        <fullName evidence="1">Ketol-acid reductoisomerase type 1</fullName>
    </alternativeName>
    <alternativeName>
        <fullName evidence="1">Ketol-acid reductoisomerase type I</fullName>
    </alternativeName>
</protein>
<sequence>MRVYYDRDADLNLIKGKKVVIVGYGSQGHAHALNLKDSGVKEIAIALRKGSASAKKAEGAGFKVMEVAEAAKWGDLVMMLTPDELQGDIYREHLHDNMKKGAALIFAHGLNVHFNLLDPRADLDVLMIAPKGPGHTVRAEYQRGGGVPCLIAVAKDSSGNAHDLGLSYASAIGGGRAGIIETTFREECETDLFGEQAVLCGGLVELIKNGFETLVEAGYAPEMAYFECLHEVKLIVDLIYEGGIANMNYSISNTAEYGEYVTGPRIVTAETKKEMKRVLDDIQSGKFARDWMLENKVNQTSFKATRARLAAHPIEEVGARLRDMMPWIKKAAMVDKAKN</sequence>
<gene>
    <name evidence="1" type="primary">ilvC</name>
    <name type="ordered locus">Nwi_2341</name>
</gene>
<comment type="function">
    <text evidence="1">Involved in the biosynthesis of branched-chain amino acids (BCAA). Catalyzes an alkyl-migration followed by a ketol-acid reduction of (S)-2-acetolactate (S2AL) to yield (R)-2,3-dihydroxy-isovalerate. In the isomerase reaction, S2AL is rearranged via a Mg-dependent methyl migration to produce 3-hydroxy-3-methyl-2-ketobutyrate (HMKB). In the reductase reaction, this 2-ketoacid undergoes a metal-dependent reduction by NADPH to yield (R)-2,3-dihydroxy-isovalerate.</text>
</comment>
<comment type="catalytic activity">
    <reaction evidence="1">
        <text>(2R)-2,3-dihydroxy-3-methylbutanoate + NADP(+) = (2S)-2-acetolactate + NADPH + H(+)</text>
        <dbReference type="Rhea" id="RHEA:22068"/>
        <dbReference type="ChEBI" id="CHEBI:15378"/>
        <dbReference type="ChEBI" id="CHEBI:49072"/>
        <dbReference type="ChEBI" id="CHEBI:57783"/>
        <dbReference type="ChEBI" id="CHEBI:58349"/>
        <dbReference type="ChEBI" id="CHEBI:58476"/>
        <dbReference type="EC" id="1.1.1.86"/>
    </reaction>
</comment>
<comment type="catalytic activity">
    <reaction evidence="1">
        <text>(2R,3R)-2,3-dihydroxy-3-methylpentanoate + NADP(+) = (S)-2-ethyl-2-hydroxy-3-oxobutanoate + NADPH + H(+)</text>
        <dbReference type="Rhea" id="RHEA:13493"/>
        <dbReference type="ChEBI" id="CHEBI:15378"/>
        <dbReference type="ChEBI" id="CHEBI:49256"/>
        <dbReference type="ChEBI" id="CHEBI:49258"/>
        <dbReference type="ChEBI" id="CHEBI:57783"/>
        <dbReference type="ChEBI" id="CHEBI:58349"/>
        <dbReference type="EC" id="1.1.1.86"/>
    </reaction>
</comment>
<comment type="cofactor">
    <cofactor evidence="1">
        <name>Mg(2+)</name>
        <dbReference type="ChEBI" id="CHEBI:18420"/>
    </cofactor>
    <text evidence="1">Binds 2 magnesium ions per subunit.</text>
</comment>
<comment type="pathway">
    <text evidence="1">Amino-acid biosynthesis; L-isoleucine biosynthesis; L-isoleucine from 2-oxobutanoate: step 2/4.</text>
</comment>
<comment type="pathway">
    <text evidence="1">Amino-acid biosynthesis; L-valine biosynthesis; L-valine from pyruvate: step 2/4.</text>
</comment>
<comment type="similarity">
    <text evidence="1">Belongs to the ketol-acid reductoisomerase family.</text>
</comment>
<accession>Q3SQ46</accession>
<keyword id="KW-0028">Amino-acid biosynthesis</keyword>
<keyword id="KW-0100">Branched-chain amino acid biosynthesis</keyword>
<keyword id="KW-0460">Magnesium</keyword>
<keyword id="KW-0479">Metal-binding</keyword>
<keyword id="KW-0521">NADP</keyword>
<keyword id="KW-0560">Oxidoreductase</keyword>
<keyword id="KW-1185">Reference proteome</keyword>
<reference key="1">
    <citation type="journal article" date="2006" name="Appl. Environ. Microbiol.">
        <title>Genome sequence of the chemolithoautotrophic nitrite-oxidizing bacterium Nitrobacter winogradskyi Nb-255.</title>
        <authorList>
            <person name="Starkenburg S.R."/>
            <person name="Chain P.S.G."/>
            <person name="Sayavedra-Soto L.A."/>
            <person name="Hauser L."/>
            <person name="Land M.L."/>
            <person name="Larimer F.W."/>
            <person name="Malfatti S.A."/>
            <person name="Klotz M.G."/>
            <person name="Bottomley P.J."/>
            <person name="Arp D.J."/>
            <person name="Hickey W.J."/>
        </authorList>
    </citation>
    <scope>NUCLEOTIDE SEQUENCE [LARGE SCALE GENOMIC DNA]</scope>
    <source>
        <strain>ATCC 25391 / DSM 10237 / CIP 104748 / NCIMB 11846 / Nb-255</strain>
    </source>
</reference>